<keyword id="KW-0007">Acetylation</keyword>
<keyword id="KW-0520">NAD</keyword>
<keyword id="KW-0560">Oxidoreductase</keyword>
<feature type="chain" id="PRO_1000099190" description="Mannitol-1-phosphate 5-dehydrogenase">
    <location>
        <begin position="1"/>
        <end position="382"/>
    </location>
</feature>
<feature type="binding site" evidence="1">
    <location>
        <begin position="3"/>
        <end position="14"/>
    </location>
    <ligand>
        <name>NAD(+)</name>
        <dbReference type="ChEBI" id="CHEBI:57540"/>
    </ligand>
</feature>
<feature type="modified residue" description="N6-acetyllysine" evidence="1">
    <location>
        <position position="269"/>
    </location>
</feature>
<dbReference type="EC" id="1.1.1.17" evidence="1"/>
<dbReference type="EMBL" id="CP000948">
    <property type="protein sequence ID" value="ACB04649.1"/>
    <property type="molecule type" value="Genomic_DNA"/>
</dbReference>
<dbReference type="RefSeq" id="WP_000645439.1">
    <property type="nucleotide sequence ID" value="NC_010473.1"/>
</dbReference>
<dbReference type="SMR" id="B1X8L4"/>
<dbReference type="KEGG" id="ecd:ECDH10B_3781"/>
<dbReference type="HOGENOM" id="CLU_036089_2_0_6"/>
<dbReference type="GO" id="GO:0005829">
    <property type="term" value="C:cytosol"/>
    <property type="evidence" value="ECO:0007669"/>
    <property type="project" value="TreeGrafter"/>
</dbReference>
<dbReference type="GO" id="GO:0008926">
    <property type="term" value="F:mannitol-1-phosphate 5-dehydrogenase activity"/>
    <property type="evidence" value="ECO:0007669"/>
    <property type="project" value="UniProtKB-UniRule"/>
</dbReference>
<dbReference type="GO" id="GO:0019592">
    <property type="term" value="P:mannitol catabolic process"/>
    <property type="evidence" value="ECO:0007669"/>
    <property type="project" value="TreeGrafter"/>
</dbReference>
<dbReference type="FunFam" id="1.10.1040.10:FF:000009">
    <property type="entry name" value="Mannitol-1-phosphate 5-dehydrogenase"/>
    <property type="match status" value="1"/>
</dbReference>
<dbReference type="FunFam" id="3.40.50.720:FF:000075">
    <property type="entry name" value="Mannitol-1-phosphate 5-dehydrogenase"/>
    <property type="match status" value="1"/>
</dbReference>
<dbReference type="Gene3D" id="1.10.1040.10">
    <property type="entry name" value="N-(1-d-carboxylethyl)-l-norvaline Dehydrogenase, domain 2"/>
    <property type="match status" value="1"/>
</dbReference>
<dbReference type="Gene3D" id="3.40.50.720">
    <property type="entry name" value="NAD(P)-binding Rossmann-like Domain"/>
    <property type="match status" value="1"/>
</dbReference>
<dbReference type="HAMAP" id="MF_00196">
    <property type="entry name" value="Mannitol_dehydrog"/>
    <property type="match status" value="1"/>
</dbReference>
<dbReference type="InterPro" id="IPR008927">
    <property type="entry name" value="6-PGluconate_DH-like_C_sf"/>
</dbReference>
<dbReference type="InterPro" id="IPR013328">
    <property type="entry name" value="6PGD_dom2"/>
</dbReference>
<dbReference type="InterPro" id="IPR023028">
    <property type="entry name" value="Mannitol_1_phos_5_DH"/>
</dbReference>
<dbReference type="InterPro" id="IPR000669">
    <property type="entry name" value="Mannitol_DH"/>
</dbReference>
<dbReference type="InterPro" id="IPR013118">
    <property type="entry name" value="Mannitol_DH_C"/>
</dbReference>
<dbReference type="InterPro" id="IPR023027">
    <property type="entry name" value="Mannitol_DH_CS"/>
</dbReference>
<dbReference type="InterPro" id="IPR013131">
    <property type="entry name" value="Mannitol_DH_N"/>
</dbReference>
<dbReference type="InterPro" id="IPR036291">
    <property type="entry name" value="NAD(P)-bd_dom_sf"/>
</dbReference>
<dbReference type="NCBIfam" id="NF002646">
    <property type="entry name" value="PRK02318.1-2"/>
    <property type="match status" value="1"/>
</dbReference>
<dbReference type="NCBIfam" id="NF002647">
    <property type="entry name" value="PRK02318.1-3"/>
    <property type="match status" value="1"/>
</dbReference>
<dbReference type="NCBIfam" id="NF002648">
    <property type="entry name" value="PRK02318.1-4"/>
    <property type="match status" value="1"/>
</dbReference>
<dbReference type="NCBIfam" id="NF002650">
    <property type="entry name" value="PRK02318.2-2"/>
    <property type="match status" value="1"/>
</dbReference>
<dbReference type="NCBIfam" id="NF002652">
    <property type="entry name" value="PRK02318.2-5"/>
    <property type="match status" value="1"/>
</dbReference>
<dbReference type="PANTHER" id="PTHR30524:SF0">
    <property type="entry name" value="ALTRONATE OXIDOREDUCTASE-RELATED"/>
    <property type="match status" value="1"/>
</dbReference>
<dbReference type="PANTHER" id="PTHR30524">
    <property type="entry name" value="MANNITOL-1-PHOSPHATE 5-DEHYDROGENASE"/>
    <property type="match status" value="1"/>
</dbReference>
<dbReference type="Pfam" id="PF01232">
    <property type="entry name" value="Mannitol_dh"/>
    <property type="match status" value="1"/>
</dbReference>
<dbReference type="Pfam" id="PF08125">
    <property type="entry name" value="Mannitol_dh_C"/>
    <property type="match status" value="1"/>
</dbReference>
<dbReference type="PRINTS" id="PR00084">
    <property type="entry name" value="MTLDHDRGNASE"/>
</dbReference>
<dbReference type="SUPFAM" id="SSF48179">
    <property type="entry name" value="6-phosphogluconate dehydrogenase C-terminal domain-like"/>
    <property type="match status" value="1"/>
</dbReference>
<dbReference type="SUPFAM" id="SSF51735">
    <property type="entry name" value="NAD(P)-binding Rossmann-fold domains"/>
    <property type="match status" value="1"/>
</dbReference>
<dbReference type="PROSITE" id="PS00974">
    <property type="entry name" value="MANNITOL_DHGENASE"/>
    <property type="match status" value="1"/>
</dbReference>
<reference key="1">
    <citation type="journal article" date="2008" name="J. Bacteriol.">
        <title>The complete genome sequence of Escherichia coli DH10B: insights into the biology of a laboratory workhorse.</title>
        <authorList>
            <person name="Durfee T."/>
            <person name="Nelson R."/>
            <person name="Baldwin S."/>
            <person name="Plunkett G. III"/>
            <person name="Burland V."/>
            <person name="Mau B."/>
            <person name="Petrosino J.F."/>
            <person name="Qin X."/>
            <person name="Muzny D.M."/>
            <person name="Ayele M."/>
            <person name="Gibbs R.A."/>
            <person name="Csorgo B."/>
            <person name="Posfai G."/>
            <person name="Weinstock G.M."/>
            <person name="Blattner F.R."/>
        </authorList>
    </citation>
    <scope>NUCLEOTIDE SEQUENCE [LARGE SCALE GENOMIC DNA]</scope>
    <source>
        <strain>K12 / DH10B</strain>
    </source>
</reference>
<proteinExistence type="inferred from homology"/>
<accession>B1X8L4</accession>
<sequence>MKALHFGAGNIGRGFIGKLLADAGIQLTFADVNQVVLDALNARHSYQVHVVGETEQVDTVSGVNAVSSIGDDVVDLIAQVDLVTTAVGPVVLERIAPAIAKGQVKRKEQGNESPLNIIACENMVRGTTQLKGHVMNALPEDAKAWVEEHVGFVDSAVDRIVPPSASATNDPLEVTVETFSEWIVDKTQFKGALPNIPGMELTDNLMAFVERKLFTLNTGHAITAYLGKLAGHQTIRDAILDEKIRAVVKGAMEESGAVLIKRYGFDADKHAAYIQKILGRFENPYLKDDVERVGRQPLRKLSAGDRLIKPLLGTLEYGLPHKNLIEGIAAAMHFRSEDDPQAQELAALIADKGPQAALAQISGLDANSEVVSEAVTAYKAMQ</sequence>
<evidence type="ECO:0000255" key="1">
    <source>
        <dbReference type="HAMAP-Rule" id="MF_00196"/>
    </source>
</evidence>
<gene>
    <name evidence="1" type="primary">mtlD</name>
    <name type="ordered locus">ECDH10B_3781</name>
</gene>
<name>MTLD_ECODH</name>
<protein>
    <recommendedName>
        <fullName evidence="1">Mannitol-1-phosphate 5-dehydrogenase</fullName>
        <ecNumber evidence="1">1.1.1.17</ecNumber>
    </recommendedName>
</protein>
<organism>
    <name type="scientific">Escherichia coli (strain K12 / DH10B)</name>
    <dbReference type="NCBI Taxonomy" id="316385"/>
    <lineage>
        <taxon>Bacteria</taxon>
        <taxon>Pseudomonadati</taxon>
        <taxon>Pseudomonadota</taxon>
        <taxon>Gammaproteobacteria</taxon>
        <taxon>Enterobacterales</taxon>
        <taxon>Enterobacteriaceae</taxon>
        <taxon>Escherichia</taxon>
    </lineage>
</organism>
<comment type="catalytic activity">
    <reaction evidence="1">
        <text>D-mannitol 1-phosphate + NAD(+) = beta-D-fructose 6-phosphate + NADH + H(+)</text>
        <dbReference type="Rhea" id="RHEA:19661"/>
        <dbReference type="ChEBI" id="CHEBI:15378"/>
        <dbReference type="ChEBI" id="CHEBI:57540"/>
        <dbReference type="ChEBI" id="CHEBI:57634"/>
        <dbReference type="ChEBI" id="CHEBI:57945"/>
        <dbReference type="ChEBI" id="CHEBI:61381"/>
        <dbReference type="EC" id="1.1.1.17"/>
    </reaction>
</comment>
<comment type="similarity">
    <text evidence="1">Belongs to the mannitol dehydrogenase family.</text>
</comment>